<reference key="1">
    <citation type="submission" date="2006-09" db="EMBL/GenBank/DDBJ databases">
        <title>Complete sequence of chromosome 1 of Shewanella sp. ANA-3.</title>
        <authorList>
            <person name="Copeland A."/>
            <person name="Lucas S."/>
            <person name="Lapidus A."/>
            <person name="Barry K."/>
            <person name="Detter J.C."/>
            <person name="Glavina del Rio T."/>
            <person name="Hammon N."/>
            <person name="Israni S."/>
            <person name="Dalin E."/>
            <person name="Tice H."/>
            <person name="Pitluck S."/>
            <person name="Chertkov O."/>
            <person name="Brettin T."/>
            <person name="Bruce D."/>
            <person name="Han C."/>
            <person name="Tapia R."/>
            <person name="Gilna P."/>
            <person name="Schmutz J."/>
            <person name="Larimer F."/>
            <person name="Land M."/>
            <person name="Hauser L."/>
            <person name="Kyrpides N."/>
            <person name="Kim E."/>
            <person name="Newman D."/>
            <person name="Salticov C."/>
            <person name="Konstantinidis K."/>
            <person name="Klappenback J."/>
            <person name="Tiedje J."/>
            <person name="Richardson P."/>
        </authorList>
    </citation>
    <scope>NUCLEOTIDE SEQUENCE [LARGE SCALE GENOMIC DNA]</scope>
    <source>
        <strain>ANA-3</strain>
    </source>
</reference>
<proteinExistence type="inferred from homology"/>
<accession>A0KTW7</accession>
<organism>
    <name type="scientific">Shewanella sp. (strain ANA-3)</name>
    <dbReference type="NCBI Taxonomy" id="94122"/>
    <lineage>
        <taxon>Bacteria</taxon>
        <taxon>Pseudomonadati</taxon>
        <taxon>Pseudomonadota</taxon>
        <taxon>Gammaproteobacteria</taxon>
        <taxon>Alteromonadales</taxon>
        <taxon>Shewanellaceae</taxon>
        <taxon>Shewanella</taxon>
    </lineage>
</organism>
<name>SYL_SHESA</name>
<gene>
    <name evidence="1" type="primary">leuS</name>
    <name type="ordered locus">Shewana3_1001</name>
</gene>
<comment type="catalytic activity">
    <reaction evidence="1">
        <text>tRNA(Leu) + L-leucine + ATP = L-leucyl-tRNA(Leu) + AMP + diphosphate</text>
        <dbReference type="Rhea" id="RHEA:11688"/>
        <dbReference type="Rhea" id="RHEA-COMP:9613"/>
        <dbReference type="Rhea" id="RHEA-COMP:9622"/>
        <dbReference type="ChEBI" id="CHEBI:30616"/>
        <dbReference type="ChEBI" id="CHEBI:33019"/>
        <dbReference type="ChEBI" id="CHEBI:57427"/>
        <dbReference type="ChEBI" id="CHEBI:78442"/>
        <dbReference type="ChEBI" id="CHEBI:78494"/>
        <dbReference type="ChEBI" id="CHEBI:456215"/>
        <dbReference type="EC" id="6.1.1.4"/>
    </reaction>
</comment>
<comment type="subcellular location">
    <subcellularLocation>
        <location evidence="1">Cytoplasm</location>
    </subcellularLocation>
</comment>
<comment type="similarity">
    <text evidence="1">Belongs to the class-I aminoacyl-tRNA synthetase family.</text>
</comment>
<sequence>MQEQYNPSEIEALVQKHWHDNKTFEVTEDANKEKFYCLSMFPYPSGRLHMGHVRNYTIGDVVARFQRLQGKNVLQPIGWDSFGLPAENAAINNKTAPAPWTYQNIEYMKNQLKLLGFGYDWSREIATCTPEYYRWEQWFFTKLYEKGLVYKKTASVNWCPNDETVLANEQVQDGCCWRCDTPVEQKEIPQWFIKITAYAEELLNDIDTLDGWPEQVKTMQRNWIGRSEGVEMTFGVAGSDKSFDIYTTRPDTLMGVTYVAIAAGHPLAELAAQTNPELAQFIEECKNSTTSEADLATMEKRGVATGLYAIHPITGKQVPIWAANFVLMNYGTGAVMSVPGHDQRDYEFAKKYNLPIEAVIKPVDGELDISEAAYTEKGVLFNSGEFDGLDFDGAFNAIADKLVAEGKGKRQVNYRLRDWGVSRQRYWGAPIPMVTLADGTVIPTPEDQLPVILPEDVVMDGIQSPIKADKEWAKTQVNGQDALRETDTFDTFMESSWYYARYCSPQADQMLDPTKANYWLPVDQYIGGIEHACMHLLYFRFFHKLLRDAGLVNSNEPAKQLLTQGMVLADAFYYTNDKGARVWVSPLDVVTTEKDDKGRVTKAIDKDGNELVYTGMCKMSKSKNNGIDPQVMVEKYGADTVRLFMMFASPPELTLEWQESGVEGAHRFIKRLWKLASDYVAQDNSEALDVSKLTSEQKALRREVHKTIAKVTDDIGRRQMFNTAVAAVMELMNHLQKAPQTTGQDRAIIGEALTAVVRLLYPIIPHVSFTLWNELGNTNSIEDSQWPVVDESALVEDSKLIVVQVNGKVRAKITVAADADQASVEALGMADEQVIKYLDGVTVRKVIYVPGKLLSIVAN</sequence>
<feature type="chain" id="PRO_1000009426" description="Leucine--tRNA ligase">
    <location>
        <begin position="1"/>
        <end position="859"/>
    </location>
</feature>
<feature type="short sequence motif" description="'HIGH' region">
    <location>
        <begin position="42"/>
        <end position="52"/>
    </location>
</feature>
<feature type="short sequence motif" description="'KMSKS' region">
    <location>
        <begin position="618"/>
        <end position="622"/>
    </location>
</feature>
<feature type="binding site" evidence="1">
    <location>
        <position position="621"/>
    </location>
    <ligand>
        <name>ATP</name>
        <dbReference type="ChEBI" id="CHEBI:30616"/>
    </ligand>
</feature>
<evidence type="ECO:0000255" key="1">
    <source>
        <dbReference type="HAMAP-Rule" id="MF_00049"/>
    </source>
</evidence>
<dbReference type="EC" id="6.1.1.4" evidence="1"/>
<dbReference type="EMBL" id="CP000469">
    <property type="protein sequence ID" value="ABK47236.1"/>
    <property type="molecule type" value="Genomic_DNA"/>
</dbReference>
<dbReference type="RefSeq" id="WP_011716120.1">
    <property type="nucleotide sequence ID" value="NC_008577.1"/>
</dbReference>
<dbReference type="SMR" id="A0KTW7"/>
<dbReference type="STRING" id="94122.Shewana3_1001"/>
<dbReference type="KEGG" id="shn:Shewana3_1001"/>
<dbReference type="eggNOG" id="COG0495">
    <property type="taxonomic scope" value="Bacteria"/>
</dbReference>
<dbReference type="HOGENOM" id="CLU_004427_0_0_6"/>
<dbReference type="OrthoDB" id="9810365at2"/>
<dbReference type="Proteomes" id="UP000002589">
    <property type="component" value="Chromosome"/>
</dbReference>
<dbReference type="GO" id="GO:0005829">
    <property type="term" value="C:cytosol"/>
    <property type="evidence" value="ECO:0007669"/>
    <property type="project" value="TreeGrafter"/>
</dbReference>
<dbReference type="GO" id="GO:0002161">
    <property type="term" value="F:aminoacyl-tRNA deacylase activity"/>
    <property type="evidence" value="ECO:0007669"/>
    <property type="project" value="InterPro"/>
</dbReference>
<dbReference type="GO" id="GO:0005524">
    <property type="term" value="F:ATP binding"/>
    <property type="evidence" value="ECO:0007669"/>
    <property type="project" value="UniProtKB-UniRule"/>
</dbReference>
<dbReference type="GO" id="GO:0004823">
    <property type="term" value="F:leucine-tRNA ligase activity"/>
    <property type="evidence" value="ECO:0007669"/>
    <property type="project" value="UniProtKB-UniRule"/>
</dbReference>
<dbReference type="GO" id="GO:0006429">
    <property type="term" value="P:leucyl-tRNA aminoacylation"/>
    <property type="evidence" value="ECO:0007669"/>
    <property type="project" value="UniProtKB-UniRule"/>
</dbReference>
<dbReference type="CDD" id="cd07958">
    <property type="entry name" value="Anticodon_Ia_Leu_BEm"/>
    <property type="match status" value="1"/>
</dbReference>
<dbReference type="CDD" id="cd00812">
    <property type="entry name" value="LeuRS_core"/>
    <property type="match status" value="1"/>
</dbReference>
<dbReference type="FunFam" id="1.10.730.10:FF:000003">
    <property type="entry name" value="Leucine--tRNA ligase"/>
    <property type="match status" value="1"/>
</dbReference>
<dbReference type="FunFam" id="2.20.28.290:FF:000001">
    <property type="entry name" value="Leucine--tRNA ligase"/>
    <property type="match status" value="1"/>
</dbReference>
<dbReference type="FunFam" id="3.10.20.590:FF:000001">
    <property type="entry name" value="Leucine--tRNA ligase"/>
    <property type="match status" value="1"/>
</dbReference>
<dbReference type="FunFam" id="3.40.50.620:FF:000003">
    <property type="entry name" value="Leucine--tRNA ligase"/>
    <property type="match status" value="1"/>
</dbReference>
<dbReference type="FunFam" id="3.40.50.620:FF:000124">
    <property type="entry name" value="Leucine--tRNA ligase"/>
    <property type="match status" value="1"/>
</dbReference>
<dbReference type="FunFam" id="3.90.740.10:FF:000012">
    <property type="entry name" value="Leucine--tRNA ligase"/>
    <property type="match status" value="1"/>
</dbReference>
<dbReference type="Gene3D" id="2.20.28.290">
    <property type="match status" value="1"/>
</dbReference>
<dbReference type="Gene3D" id="3.10.20.590">
    <property type="match status" value="1"/>
</dbReference>
<dbReference type="Gene3D" id="3.40.50.620">
    <property type="entry name" value="HUPs"/>
    <property type="match status" value="1"/>
</dbReference>
<dbReference type="Gene3D" id="1.10.730.10">
    <property type="entry name" value="Isoleucyl-tRNA Synthetase, Domain 1"/>
    <property type="match status" value="2"/>
</dbReference>
<dbReference type="Gene3D" id="3.90.740.10">
    <property type="entry name" value="Valyl/Leucyl/Isoleucyl-tRNA synthetase, editing domain"/>
    <property type="match status" value="1"/>
</dbReference>
<dbReference type="HAMAP" id="MF_00049_B">
    <property type="entry name" value="Leu_tRNA_synth_B"/>
    <property type="match status" value="1"/>
</dbReference>
<dbReference type="InterPro" id="IPR001412">
    <property type="entry name" value="aa-tRNA-synth_I_CS"/>
</dbReference>
<dbReference type="InterPro" id="IPR002300">
    <property type="entry name" value="aa-tRNA-synth_Ia"/>
</dbReference>
<dbReference type="InterPro" id="IPR002302">
    <property type="entry name" value="Leu-tRNA-ligase"/>
</dbReference>
<dbReference type="InterPro" id="IPR025709">
    <property type="entry name" value="Leu_tRNA-synth_edit"/>
</dbReference>
<dbReference type="InterPro" id="IPR013155">
    <property type="entry name" value="M/V/L/I-tRNA-synth_anticd-bd"/>
</dbReference>
<dbReference type="InterPro" id="IPR015413">
    <property type="entry name" value="Methionyl/Leucyl_tRNA_Synth"/>
</dbReference>
<dbReference type="InterPro" id="IPR014729">
    <property type="entry name" value="Rossmann-like_a/b/a_fold"/>
</dbReference>
<dbReference type="InterPro" id="IPR009080">
    <property type="entry name" value="tRNAsynth_Ia_anticodon-bd"/>
</dbReference>
<dbReference type="InterPro" id="IPR009008">
    <property type="entry name" value="Val/Leu/Ile-tRNA-synth_edit"/>
</dbReference>
<dbReference type="NCBIfam" id="TIGR00396">
    <property type="entry name" value="leuS_bact"/>
    <property type="match status" value="1"/>
</dbReference>
<dbReference type="PANTHER" id="PTHR43740:SF2">
    <property type="entry name" value="LEUCINE--TRNA LIGASE, MITOCHONDRIAL"/>
    <property type="match status" value="1"/>
</dbReference>
<dbReference type="PANTHER" id="PTHR43740">
    <property type="entry name" value="LEUCYL-TRNA SYNTHETASE"/>
    <property type="match status" value="1"/>
</dbReference>
<dbReference type="Pfam" id="PF08264">
    <property type="entry name" value="Anticodon_1"/>
    <property type="match status" value="1"/>
</dbReference>
<dbReference type="Pfam" id="PF00133">
    <property type="entry name" value="tRNA-synt_1"/>
    <property type="match status" value="2"/>
</dbReference>
<dbReference type="Pfam" id="PF13603">
    <property type="entry name" value="tRNA-synt_1_2"/>
    <property type="match status" value="1"/>
</dbReference>
<dbReference type="Pfam" id="PF09334">
    <property type="entry name" value="tRNA-synt_1g"/>
    <property type="match status" value="1"/>
</dbReference>
<dbReference type="PRINTS" id="PR00985">
    <property type="entry name" value="TRNASYNTHLEU"/>
</dbReference>
<dbReference type="SUPFAM" id="SSF47323">
    <property type="entry name" value="Anticodon-binding domain of a subclass of class I aminoacyl-tRNA synthetases"/>
    <property type="match status" value="1"/>
</dbReference>
<dbReference type="SUPFAM" id="SSF52374">
    <property type="entry name" value="Nucleotidylyl transferase"/>
    <property type="match status" value="1"/>
</dbReference>
<dbReference type="SUPFAM" id="SSF50677">
    <property type="entry name" value="ValRS/IleRS/LeuRS editing domain"/>
    <property type="match status" value="1"/>
</dbReference>
<dbReference type="PROSITE" id="PS00178">
    <property type="entry name" value="AA_TRNA_LIGASE_I"/>
    <property type="match status" value="1"/>
</dbReference>
<protein>
    <recommendedName>
        <fullName evidence="1">Leucine--tRNA ligase</fullName>
        <ecNumber evidence="1">6.1.1.4</ecNumber>
    </recommendedName>
    <alternativeName>
        <fullName evidence="1">Leucyl-tRNA synthetase</fullName>
        <shortName evidence="1">LeuRS</shortName>
    </alternativeName>
</protein>
<keyword id="KW-0030">Aminoacyl-tRNA synthetase</keyword>
<keyword id="KW-0067">ATP-binding</keyword>
<keyword id="KW-0963">Cytoplasm</keyword>
<keyword id="KW-0436">Ligase</keyword>
<keyword id="KW-0547">Nucleotide-binding</keyword>
<keyword id="KW-0648">Protein biosynthesis</keyword>